<accession>Q6D263</accession>
<comment type="function">
    <text evidence="1">Chaperone involved in the maturation of iron-sulfur cluster-containing proteins. Has a low intrinsic ATPase activity which is markedly stimulated by HscB. Involved in the maturation of IscU.</text>
</comment>
<comment type="similarity">
    <text evidence="1">Belongs to the heat shock protein 70 family.</text>
</comment>
<reference key="1">
    <citation type="journal article" date="2004" name="Proc. Natl. Acad. Sci. U.S.A.">
        <title>Genome sequence of the enterobacterial phytopathogen Erwinia carotovora subsp. atroseptica and characterization of virulence factors.</title>
        <authorList>
            <person name="Bell K.S."/>
            <person name="Sebaihia M."/>
            <person name="Pritchard L."/>
            <person name="Holden M.T.G."/>
            <person name="Hyman L.J."/>
            <person name="Holeva M.C."/>
            <person name="Thomson N.R."/>
            <person name="Bentley S.D."/>
            <person name="Churcher L.J.C."/>
            <person name="Mungall K."/>
            <person name="Atkin R."/>
            <person name="Bason N."/>
            <person name="Brooks K."/>
            <person name="Chillingworth T."/>
            <person name="Clark K."/>
            <person name="Doggett J."/>
            <person name="Fraser A."/>
            <person name="Hance Z."/>
            <person name="Hauser H."/>
            <person name="Jagels K."/>
            <person name="Moule S."/>
            <person name="Norbertczak H."/>
            <person name="Ormond D."/>
            <person name="Price C."/>
            <person name="Quail M.A."/>
            <person name="Sanders M."/>
            <person name="Walker D."/>
            <person name="Whitehead S."/>
            <person name="Salmond G.P.C."/>
            <person name="Birch P.R.J."/>
            <person name="Parkhill J."/>
            <person name="Toth I.K."/>
        </authorList>
    </citation>
    <scope>NUCLEOTIDE SEQUENCE [LARGE SCALE GENOMIC DNA]</scope>
    <source>
        <strain>SCRI 1043 / ATCC BAA-672</strain>
    </source>
</reference>
<gene>
    <name evidence="1" type="primary">hscA</name>
    <name type="ordered locus">ECA3233</name>
</gene>
<keyword id="KW-0067">ATP-binding</keyword>
<keyword id="KW-0143">Chaperone</keyword>
<keyword id="KW-0547">Nucleotide-binding</keyword>
<keyword id="KW-1185">Reference proteome</keyword>
<dbReference type="EMBL" id="BX950851">
    <property type="protein sequence ID" value="CAG76131.1"/>
    <property type="molecule type" value="Genomic_DNA"/>
</dbReference>
<dbReference type="RefSeq" id="WP_011094754.1">
    <property type="nucleotide sequence ID" value="NC_004547.2"/>
</dbReference>
<dbReference type="SMR" id="Q6D263"/>
<dbReference type="STRING" id="218491.ECA3233"/>
<dbReference type="KEGG" id="eca:ECA3233"/>
<dbReference type="PATRIC" id="fig|218491.5.peg.3275"/>
<dbReference type="eggNOG" id="COG0443">
    <property type="taxonomic scope" value="Bacteria"/>
</dbReference>
<dbReference type="HOGENOM" id="CLU_005965_2_1_6"/>
<dbReference type="OrthoDB" id="9766019at2"/>
<dbReference type="Proteomes" id="UP000007966">
    <property type="component" value="Chromosome"/>
</dbReference>
<dbReference type="GO" id="GO:0005524">
    <property type="term" value="F:ATP binding"/>
    <property type="evidence" value="ECO:0007669"/>
    <property type="project" value="UniProtKB-KW"/>
</dbReference>
<dbReference type="GO" id="GO:0016887">
    <property type="term" value="F:ATP hydrolysis activity"/>
    <property type="evidence" value="ECO:0007669"/>
    <property type="project" value="UniProtKB-UniRule"/>
</dbReference>
<dbReference type="GO" id="GO:0140662">
    <property type="term" value="F:ATP-dependent protein folding chaperone"/>
    <property type="evidence" value="ECO:0007669"/>
    <property type="project" value="InterPro"/>
</dbReference>
<dbReference type="GO" id="GO:0051082">
    <property type="term" value="F:unfolded protein binding"/>
    <property type="evidence" value="ECO:0007669"/>
    <property type="project" value="InterPro"/>
</dbReference>
<dbReference type="GO" id="GO:0016226">
    <property type="term" value="P:iron-sulfur cluster assembly"/>
    <property type="evidence" value="ECO:0007669"/>
    <property type="project" value="InterPro"/>
</dbReference>
<dbReference type="CDD" id="cd10236">
    <property type="entry name" value="ASKHA_NBD_HSP70_HscA"/>
    <property type="match status" value="1"/>
</dbReference>
<dbReference type="FunFam" id="3.30.420.40:FF:000046">
    <property type="entry name" value="Chaperone protein HscA"/>
    <property type="match status" value="1"/>
</dbReference>
<dbReference type="FunFam" id="2.60.34.10:FF:000005">
    <property type="entry name" value="Chaperone protein HscA homolog"/>
    <property type="match status" value="1"/>
</dbReference>
<dbReference type="Gene3D" id="1.20.1270.10">
    <property type="match status" value="1"/>
</dbReference>
<dbReference type="Gene3D" id="3.30.420.40">
    <property type="match status" value="2"/>
</dbReference>
<dbReference type="Gene3D" id="3.90.640.10">
    <property type="entry name" value="Actin, Chain A, domain 4"/>
    <property type="match status" value="1"/>
</dbReference>
<dbReference type="Gene3D" id="2.60.34.10">
    <property type="entry name" value="Substrate Binding Domain Of DNAk, Chain A, domain 1"/>
    <property type="match status" value="1"/>
</dbReference>
<dbReference type="HAMAP" id="MF_00679">
    <property type="entry name" value="HscA"/>
    <property type="match status" value="1"/>
</dbReference>
<dbReference type="InterPro" id="IPR043129">
    <property type="entry name" value="ATPase_NBD"/>
</dbReference>
<dbReference type="InterPro" id="IPR018181">
    <property type="entry name" value="Heat_shock_70_CS"/>
</dbReference>
<dbReference type="InterPro" id="IPR042039">
    <property type="entry name" value="HscA_NBD"/>
</dbReference>
<dbReference type="InterPro" id="IPR029048">
    <property type="entry name" value="HSP70_C_sf"/>
</dbReference>
<dbReference type="InterPro" id="IPR029047">
    <property type="entry name" value="HSP70_peptide-bd_sf"/>
</dbReference>
<dbReference type="InterPro" id="IPR013126">
    <property type="entry name" value="Hsp_70_fam"/>
</dbReference>
<dbReference type="InterPro" id="IPR010236">
    <property type="entry name" value="ISC_FeS_clus_asmbl_HscA"/>
</dbReference>
<dbReference type="NCBIfam" id="TIGR01991">
    <property type="entry name" value="HscA"/>
    <property type="match status" value="1"/>
</dbReference>
<dbReference type="NCBIfam" id="NF003520">
    <property type="entry name" value="PRK05183.1"/>
    <property type="match status" value="1"/>
</dbReference>
<dbReference type="PANTHER" id="PTHR19375">
    <property type="entry name" value="HEAT SHOCK PROTEIN 70KDA"/>
    <property type="match status" value="1"/>
</dbReference>
<dbReference type="Pfam" id="PF00012">
    <property type="entry name" value="HSP70"/>
    <property type="match status" value="1"/>
</dbReference>
<dbReference type="PRINTS" id="PR00301">
    <property type="entry name" value="HEATSHOCK70"/>
</dbReference>
<dbReference type="SUPFAM" id="SSF53067">
    <property type="entry name" value="Actin-like ATPase domain"/>
    <property type="match status" value="2"/>
</dbReference>
<dbReference type="SUPFAM" id="SSF100934">
    <property type="entry name" value="Heat shock protein 70kD (HSP70), C-terminal subdomain"/>
    <property type="match status" value="1"/>
</dbReference>
<dbReference type="SUPFAM" id="SSF100920">
    <property type="entry name" value="Heat shock protein 70kD (HSP70), peptide-binding domain"/>
    <property type="match status" value="1"/>
</dbReference>
<dbReference type="PROSITE" id="PS00297">
    <property type="entry name" value="HSP70_1"/>
    <property type="match status" value="1"/>
</dbReference>
<dbReference type="PROSITE" id="PS00329">
    <property type="entry name" value="HSP70_2"/>
    <property type="match status" value="1"/>
</dbReference>
<dbReference type="PROSITE" id="PS01036">
    <property type="entry name" value="HSP70_3"/>
    <property type="match status" value="1"/>
</dbReference>
<protein>
    <recommendedName>
        <fullName evidence="1">Chaperone protein HscA</fullName>
    </recommendedName>
    <alternativeName>
        <fullName evidence="1">Hsc66</fullName>
    </alternativeName>
</protein>
<feature type="chain" id="PRO_0000078628" description="Chaperone protein HscA">
    <location>
        <begin position="1"/>
        <end position="616"/>
    </location>
</feature>
<sequence>MALLQISEPGLSAAPHQRRLAVGIDLGTTHSLVATVRSGEAQTLTDSDGRDLLPSVVHYRHDGHSVGWHARDNAVHDLENTVSSVKRLMGRSLADIQQRYPHLPYRFHASDNGLPLIQTSAGNLNPVQVSADILSALAARAESALGGVPDGVVITVPAYFDDAQRQGTKDAARLAGLHVLRLLNEPTAAAIAYGLDSGKEGVIAIYDLGGGTFDISVLRLSRGVFEVLATGGDSALGGDDFDHLLAEWLREQAGVHDRDDRQLDHAFRDAAVKAKIALSSADAIDVDVAGWQGTITREQLDALIAPLVKRTLLSCRRTLKDAGLTAQDVQEVVMVGGSTRVPLVREQVGTFFGRTPLTSIDPDKVVAIGAAIQADILVGNKPDSEMLLLDVIPLSLGLETMGGLVEKIIPRNTTIPVARAQEFTTFKDGQSGMMIHLLQGEREMVTDCRSLARFSLRGLPSLPAGGAHIRVTFQVDADGLLSVTAMEKSTGVEASIQVKPSYGLSDTEIATMITDSMLNAKEDVGARRLAEQKVESARVLESLQSALVADAALLSNDEKGIIVAASEHLHTMMQGSDPVAIEAAIKTVDQQTQEFAARRMDASIRRALAGHSVDEV</sequence>
<proteinExistence type="inferred from homology"/>
<evidence type="ECO:0000255" key="1">
    <source>
        <dbReference type="HAMAP-Rule" id="MF_00679"/>
    </source>
</evidence>
<name>HSCA_PECAS</name>
<organism>
    <name type="scientific">Pectobacterium atrosepticum (strain SCRI 1043 / ATCC BAA-672)</name>
    <name type="common">Erwinia carotovora subsp. atroseptica</name>
    <dbReference type="NCBI Taxonomy" id="218491"/>
    <lineage>
        <taxon>Bacteria</taxon>
        <taxon>Pseudomonadati</taxon>
        <taxon>Pseudomonadota</taxon>
        <taxon>Gammaproteobacteria</taxon>
        <taxon>Enterobacterales</taxon>
        <taxon>Pectobacteriaceae</taxon>
        <taxon>Pectobacterium</taxon>
    </lineage>
</organism>